<name>RPOB_OENEH</name>
<evidence type="ECO:0000255" key="1">
    <source>
        <dbReference type="HAMAP-Rule" id="MF_01321"/>
    </source>
</evidence>
<gene>
    <name evidence="1" type="primary">rpoB</name>
</gene>
<sequence length="1072" mass="121112">MLGDGNGGMCTIPGFNQIQFEGFCRFIDQGLTEELSKFPKIEDDTDQEIEFQLFVETYHLVEPLIKERDAVYELLTYSSELYISAGLIWKSSRDMQKQTIFIGNIPLMNSLGTSIVNGIYRIVINQILQSPGIYYRSELDHNGISVYTGTIISDWGGRLELEIDRKARIWARVSRKQKISILVLSSAMGSNLREILENVCYPEMFLSFLNEKEKKTIGSKENAILEFYQQFSCVGGDPVFSESLCKELHTKFFQQRCELGRIGRQNMNRRLNLDIPQHNTFLLPRDILAAADHLIGMKFGMGTLDDTNHLKNKRIRSVADLLQDQFGLALVRLESVVRRTICGAIRHKLIPTPHNLVTSTPLTTTYESFFGLHPLSQVLDRTNPLTQIVHGRKLSYLGPGGLTARTASFRMRDIHPSYYGRICPIDTSEGINVGLIGSLAIHARIGRGGSLESPFYEISERSNKGRMLYFSPSRDEYYMVAAGNSLALNRGIQEEQVVPARYRQEFLTLAWDQVHLRSIFPFQYFSIGASLIPFIEHNDANRALMSSNMQRQAVPLSQSERCIVGTGLERQASLDSGVTAIAEREGKIIYTNSDKIILSGSGDTLSIPLVMYQRSNKNTWMHQKPQVPRGKCIKKGQILADGAATVGGELALGKNVLVAYMPWEGYNFEDAVLISERLVYEDIYTSFHIRKYEMQTHVTSQGPERITNEIPHLEAHLLRNLDKNGIVMMGSWVEAGEILVGKLTPQMAEEESSYAPEERLLRAILGIQISTSKETCLKLPIGGRGRVIDVRWIQKRGGSSYNPETIRVYILQKREIKVGDKVAGRHGNKGIISKILPRQDMPYLQDGRPVDMVFNPLGVPSRMNVGQIFECSLGFAGDLLERHYRIAPFDERYEQEASRKLVFSELYEASKQTANPWVFEPEYPGKSRLFDGRTGDPFEQPVIIGKPYILKLIHQVDDKIHGRSSGHYARVTQQPLRGRAKQGGQRVGEMEVWALEGFGVAHLLQEMLTYKSDHIRARQGVLGTTILGGTIPKPEDAPESFRLLVRELRSLALELNHFLVSEKNFQINRKEA</sequence>
<accession>Q9MTM5</accession>
<organism>
    <name type="scientific">Oenothera elata subsp. hookeri</name>
    <name type="common">Hooker's evening primrose</name>
    <name type="synonym">Oenothera hookeri</name>
    <dbReference type="NCBI Taxonomy" id="85636"/>
    <lineage>
        <taxon>Eukaryota</taxon>
        <taxon>Viridiplantae</taxon>
        <taxon>Streptophyta</taxon>
        <taxon>Embryophyta</taxon>
        <taxon>Tracheophyta</taxon>
        <taxon>Spermatophyta</taxon>
        <taxon>Magnoliopsida</taxon>
        <taxon>eudicotyledons</taxon>
        <taxon>Gunneridae</taxon>
        <taxon>Pentapetalae</taxon>
        <taxon>rosids</taxon>
        <taxon>malvids</taxon>
        <taxon>Myrtales</taxon>
        <taxon>Onagraceae</taxon>
        <taxon>Onagroideae</taxon>
        <taxon>Onagreae</taxon>
        <taxon>Oenothera</taxon>
    </lineage>
</organism>
<protein>
    <recommendedName>
        <fullName evidence="1">DNA-directed RNA polymerase subunit beta</fullName>
        <ecNumber evidence="1">2.7.7.6</ecNumber>
    </recommendedName>
    <alternativeName>
        <fullName evidence="1">PEP</fullName>
    </alternativeName>
    <alternativeName>
        <fullName evidence="1">Plastid-encoded RNA polymerase subunit beta</fullName>
        <shortName evidence="1">RNA polymerase subunit beta</shortName>
    </alternativeName>
</protein>
<reference key="1">
    <citation type="journal article" date="2000" name="Mol. Gen. Genet.">
        <title>Complete nucleotide sequence of the Oenothera elata plastid chromosome, representing plastome I of the five distinguishable Euoenothera plastomes.</title>
        <authorList>
            <person name="Hupfer H."/>
            <person name="Swiatek M."/>
            <person name="Hornung S."/>
            <person name="Herrmann R.G."/>
            <person name="Maier R.M."/>
            <person name="Chiu W.-L."/>
            <person name="Sears B."/>
        </authorList>
    </citation>
    <scope>NUCLEOTIDE SEQUENCE [LARGE SCALE GENOMIC DNA]</scope>
    <source>
        <strain>cv. Johansen</strain>
    </source>
</reference>
<reference key="2">
    <citation type="journal article" date="2008" name="Nucleic Acids Res.">
        <title>The complete nucleotide sequences of the five genetically distinct plastid genomes of Oenothera, subsection Oenothera: I. Sequence evaluation and plastome evolution.</title>
        <authorList>
            <person name="Greiner S."/>
            <person name="Wang X."/>
            <person name="Rauwolf U."/>
            <person name="Silber M.V."/>
            <person name="Mayer K."/>
            <person name="Meurer J."/>
            <person name="Haberer G."/>
            <person name="Herrmann R.G."/>
        </authorList>
    </citation>
    <scope>SEQUENCE REVISION TO 699 AND 734-735</scope>
</reference>
<dbReference type="EC" id="2.7.7.6" evidence="1"/>
<dbReference type="EMBL" id="AJ271079">
    <property type="protein sequence ID" value="CAB67151.2"/>
    <property type="molecule type" value="Genomic_DNA"/>
</dbReference>
<dbReference type="RefSeq" id="NP_084686.2">
    <property type="nucleotide sequence ID" value="NC_002693.2"/>
</dbReference>
<dbReference type="SMR" id="Q9MTM5"/>
<dbReference type="GeneID" id="802745"/>
<dbReference type="GO" id="GO:0009507">
    <property type="term" value="C:chloroplast"/>
    <property type="evidence" value="ECO:0007669"/>
    <property type="project" value="UniProtKB-SubCell"/>
</dbReference>
<dbReference type="GO" id="GO:0000428">
    <property type="term" value="C:DNA-directed RNA polymerase complex"/>
    <property type="evidence" value="ECO:0007669"/>
    <property type="project" value="UniProtKB-KW"/>
</dbReference>
<dbReference type="GO" id="GO:0005739">
    <property type="term" value="C:mitochondrion"/>
    <property type="evidence" value="ECO:0007669"/>
    <property type="project" value="GOC"/>
</dbReference>
<dbReference type="GO" id="GO:0003677">
    <property type="term" value="F:DNA binding"/>
    <property type="evidence" value="ECO:0007669"/>
    <property type="project" value="UniProtKB-UniRule"/>
</dbReference>
<dbReference type="GO" id="GO:0003899">
    <property type="term" value="F:DNA-directed RNA polymerase activity"/>
    <property type="evidence" value="ECO:0007669"/>
    <property type="project" value="UniProtKB-UniRule"/>
</dbReference>
<dbReference type="GO" id="GO:0032549">
    <property type="term" value="F:ribonucleoside binding"/>
    <property type="evidence" value="ECO:0007669"/>
    <property type="project" value="InterPro"/>
</dbReference>
<dbReference type="GO" id="GO:0006351">
    <property type="term" value="P:DNA-templated transcription"/>
    <property type="evidence" value="ECO:0007669"/>
    <property type="project" value="UniProtKB-UniRule"/>
</dbReference>
<dbReference type="CDD" id="cd00653">
    <property type="entry name" value="RNA_pol_B_RPB2"/>
    <property type="match status" value="1"/>
</dbReference>
<dbReference type="FunFam" id="3.90.1110.10:FF:000009">
    <property type="entry name" value="DNA-directed RNA polymerase subunit beta"/>
    <property type="match status" value="1"/>
</dbReference>
<dbReference type="Gene3D" id="2.40.50.100">
    <property type="match status" value="1"/>
</dbReference>
<dbReference type="Gene3D" id="2.40.50.150">
    <property type="match status" value="1"/>
</dbReference>
<dbReference type="Gene3D" id="3.90.1100.10">
    <property type="match status" value="1"/>
</dbReference>
<dbReference type="Gene3D" id="2.30.150.10">
    <property type="entry name" value="DNA-directed RNA polymerase, beta subunit, external 1 domain"/>
    <property type="match status" value="1"/>
</dbReference>
<dbReference type="Gene3D" id="2.40.270.10">
    <property type="entry name" value="DNA-directed RNA polymerase, subunit 2, domain 6"/>
    <property type="match status" value="2"/>
</dbReference>
<dbReference type="Gene3D" id="3.90.1800.10">
    <property type="entry name" value="RNA polymerase alpha subunit dimerisation domain"/>
    <property type="match status" value="1"/>
</dbReference>
<dbReference type="Gene3D" id="3.90.1110.10">
    <property type="entry name" value="RNA polymerase Rpb2, domain 2"/>
    <property type="match status" value="1"/>
</dbReference>
<dbReference type="HAMAP" id="MF_01321">
    <property type="entry name" value="RNApol_bact_RpoB"/>
    <property type="match status" value="1"/>
</dbReference>
<dbReference type="InterPro" id="IPR042107">
    <property type="entry name" value="DNA-dir_RNA_pol_bsu_ext_1_sf"/>
</dbReference>
<dbReference type="InterPro" id="IPR015712">
    <property type="entry name" value="DNA-dir_RNA_pol_su2"/>
</dbReference>
<dbReference type="InterPro" id="IPR007120">
    <property type="entry name" value="DNA-dir_RNAP_su2_dom"/>
</dbReference>
<dbReference type="InterPro" id="IPR037033">
    <property type="entry name" value="DNA-dir_RNAP_su2_hyb_sf"/>
</dbReference>
<dbReference type="InterPro" id="IPR010243">
    <property type="entry name" value="RNA_pol_bsu_bac"/>
</dbReference>
<dbReference type="InterPro" id="IPR007121">
    <property type="entry name" value="RNA_pol_bsu_CS"/>
</dbReference>
<dbReference type="InterPro" id="IPR007642">
    <property type="entry name" value="RNA_pol_Rpb2_2"/>
</dbReference>
<dbReference type="InterPro" id="IPR037034">
    <property type="entry name" value="RNA_pol_Rpb2_2_sf"/>
</dbReference>
<dbReference type="InterPro" id="IPR007645">
    <property type="entry name" value="RNA_pol_Rpb2_3"/>
</dbReference>
<dbReference type="InterPro" id="IPR007641">
    <property type="entry name" value="RNA_pol_Rpb2_7"/>
</dbReference>
<dbReference type="InterPro" id="IPR014724">
    <property type="entry name" value="RNA_pol_RPB2_OB-fold"/>
</dbReference>
<dbReference type="NCBIfam" id="NF001616">
    <property type="entry name" value="PRK00405.1"/>
    <property type="match status" value="1"/>
</dbReference>
<dbReference type="PANTHER" id="PTHR20856">
    <property type="entry name" value="DNA-DIRECTED RNA POLYMERASE I SUBUNIT 2"/>
    <property type="match status" value="1"/>
</dbReference>
<dbReference type="Pfam" id="PF04561">
    <property type="entry name" value="RNA_pol_Rpb2_2"/>
    <property type="match status" value="1"/>
</dbReference>
<dbReference type="Pfam" id="PF04565">
    <property type="entry name" value="RNA_pol_Rpb2_3"/>
    <property type="match status" value="1"/>
</dbReference>
<dbReference type="Pfam" id="PF00562">
    <property type="entry name" value="RNA_pol_Rpb2_6"/>
    <property type="match status" value="1"/>
</dbReference>
<dbReference type="Pfam" id="PF04560">
    <property type="entry name" value="RNA_pol_Rpb2_7"/>
    <property type="match status" value="1"/>
</dbReference>
<dbReference type="SUPFAM" id="SSF64484">
    <property type="entry name" value="beta and beta-prime subunits of DNA dependent RNA-polymerase"/>
    <property type="match status" value="1"/>
</dbReference>
<dbReference type="PROSITE" id="PS01166">
    <property type="entry name" value="RNA_POL_BETA"/>
    <property type="match status" value="1"/>
</dbReference>
<comment type="function">
    <text evidence="1">DNA-dependent RNA polymerase catalyzes the transcription of DNA into RNA using the four ribonucleoside triphosphates as substrates.</text>
</comment>
<comment type="catalytic activity">
    <reaction evidence="1">
        <text>RNA(n) + a ribonucleoside 5'-triphosphate = RNA(n+1) + diphosphate</text>
        <dbReference type="Rhea" id="RHEA:21248"/>
        <dbReference type="Rhea" id="RHEA-COMP:14527"/>
        <dbReference type="Rhea" id="RHEA-COMP:17342"/>
        <dbReference type="ChEBI" id="CHEBI:33019"/>
        <dbReference type="ChEBI" id="CHEBI:61557"/>
        <dbReference type="ChEBI" id="CHEBI:140395"/>
        <dbReference type="EC" id="2.7.7.6"/>
    </reaction>
</comment>
<comment type="subunit">
    <text evidence="1">In plastids the minimal PEP RNA polymerase catalytic core is composed of four subunits: alpha, beta, beta', and beta''. When a (nuclear-encoded) sigma factor is associated with the core the holoenzyme is formed, which can initiate transcription.</text>
</comment>
<comment type="subcellular location">
    <subcellularLocation>
        <location>Plastid</location>
        <location>Chloroplast</location>
    </subcellularLocation>
</comment>
<comment type="similarity">
    <text evidence="1">Belongs to the RNA polymerase beta chain family.</text>
</comment>
<geneLocation type="chloroplast"/>
<feature type="chain" id="PRO_0000048035" description="DNA-directed RNA polymerase subunit beta">
    <location>
        <begin position="1"/>
        <end position="1072"/>
    </location>
</feature>
<keyword id="KW-0150">Chloroplast</keyword>
<keyword id="KW-0240">DNA-directed RNA polymerase</keyword>
<keyword id="KW-0548">Nucleotidyltransferase</keyword>
<keyword id="KW-0934">Plastid</keyword>
<keyword id="KW-0804">Transcription</keyword>
<keyword id="KW-0808">Transferase</keyword>
<proteinExistence type="inferred from homology"/>